<sequence length="352" mass="38252">MVFRIASSPYTHNQRQTSRIMLLVVIAALPGIAAQTWFFGWGTLFQIVLAAITALVAEAIVLRLRKQSVASHLQDYSALLTGLLLAVSIPPLAPWWMVVLGTGFAIIIAKQLYGGLGQNPFNPAMIGYVVLLISFPVQMTSWLPPYEIAATTPDMLDTLRMIFTGHTASGGDMTLLRIGIDGISQATPLDTFKTSLRAGHSVEQIMQYPIYSGALAGVGWQWVNLAWLVGGVFLLWQKAIRWHIPVSFLLTLALCAALGWLFSPATLASPQLHLLSGATMLGAFFILTDPVTASTTNRGRLIFGALAGVLVWLIRSFGGYPDGVAFAVLLANITVPLIDYYTRPRVYGHRKG</sequence>
<protein>
    <recommendedName>
        <fullName evidence="1">Ion-translocating oxidoreductase complex subunit D</fullName>
        <ecNumber evidence="1">7.-.-.-</ecNumber>
    </recommendedName>
    <alternativeName>
        <fullName evidence="1">Rsx electron transport complex subunit D</fullName>
    </alternativeName>
</protein>
<reference key="1">
    <citation type="journal article" date="2011" name="J. Bacteriol.">
        <title>Comparative genomics of 28 Salmonella enterica isolates: evidence for CRISPR-mediated adaptive sublineage evolution.</title>
        <authorList>
            <person name="Fricke W.F."/>
            <person name="Mammel M.K."/>
            <person name="McDermott P.F."/>
            <person name="Tartera C."/>
            <person name="White D.G."/>
            <person name="Leclerc J.E."/>
            <person name="Ravel J."/>
            <person name="Cebula T.A."/>
        </authorList>
    </citation>
    <scope>NUCLEOTIDE SEQUENCE [LARGE SCALE GENOMIC DNA]</scope>
    <source>
        <strain>SL483</strain>
    </source>
</reference>
<gene>
    <name evidence="1" type="primary">rsxD</name>
    <name type="ordered locus">SeAg_B1718</name>
</gene>
<comment type="function">
    <text evidence="1">Part of a membrane-bound complex that couples electron transfer with translocation of ions across the membrane. Required to maintain the reduced state of SoxR.</text>
</comment>
<comment type="cofactor">
    <cofactor evidence="1">
        <name>FMN</name>
        <dbReference type="ChEBI" id="CHEBI:58210"/>
    </cofactor>
</comment>
<comment type="subunit">
    <text evidence="1">The complex is composed of six subunits: RsxA, RsxB, RsxC, RsxD, RsxE and RsxG.</text>
</comment>
<comment type="subcellular location">
    <subcellularLocation>
        <location evidence="1">Cell inner membrane</location>
        <topology evidence="1">Multi-pass membrane protein</topology>
    </subcellularLocation>
</comment>
<comment type="similarity">
    <text evidence="1">Belongs to the NqrB/RnfD family.</text>
</comment>
<keyword id="KW-0997">Cell inner membrane</keyword>
<keyword id="KW-1003">Cell membrane</keyword>
<keyword id="KW-0249">Electron transport</keyword>
<keyword id="KW-0285">Flavoprotein</keyword>
<keyword id="KW-0288">FMN</keyword>
<keyword id="KW-0472">Membrane</keyword>
<keyword id="KW-0597">Phosphoprotein</keyword>
<keyword id="KW-1278">Translocase</keyword>
<keyword id="KW-0812">Transmembrane</keyword>
<keyword id="KW-1133">Transmembrane helix</keyword>
<keyword id="KW-0813">Transport</keyword>
<name>RSXD_SALA4</name>
<feature type="chain" id="PRO_1000125391" description="Ion-translocating oxidoreductase complex subunit D">
    <location>
        <begin position="1"/>
        <end position="352"/>
    </location>
</feature>
<feature type="transmembrane region" description="Helical" evidence="1">
    <location>
        <begin position="20"/>
        <end position="40"/>
    </location>
</feature>
<feature type="transmembrane region" description="Helical" evidence="1">
    <location>
        <begin position="42"/>
        <end position="62"/>
    </location>
</feature>
<feature type="transmembrane region" description="Helical" evidence="1">
    <location>
        <begin position="69"/>
        <end position="91"/>
    </location>
</feature>
<feature type="transmembrane region" description="Helical" evidence="1">
    <location>
        <begin position="123"/>
        <end position="143"/>
    </location>
</feature>
<feature type="transmembrane region" description="Helical" evidence="1">
    <location>
        <begin position="215"/>
        <end position="235"/>
    </location>
</feature>
<feature type="transmembrane region" description="Helical" evidence="1">
    <location>
        <begin position="242"/>
        <end position="262"/>
    </location>
</feature>
<feature type="transmembrane region" description="Helical" evidence="1">
    <location>
        <begin position="267"/>
        <end position="287"/>
    </location>
</feature>
<feature type="transmembrane region" description="Helical" evidence="1">
    <location>
        <begin position="301"/>
        <end position="321"/>
    </location>
</feature>
<feature type="transmembrane region" description="Helical" evidence="1">
    <location>
        <begin position="322"/>
        <end position="342"/>
    </location>
</feature>
<feature type="modified residue" description="FMN phosphoryl threonine" evidence="1">
    <location>
        <position position="187"/>
    </location>
</feature>
<evidence type="ECO:0000255" key="1">
    <source>
        <dbReference type="HAMAP-Rule" id="MF_00462"/>
    </source>
</evidence>
<accession>B5F6J1</accession>
<proteinExistence type="inferred from homology"/>
<dbReference type="EC" id="7.-.-.-" evidence="1"/>
<dbReference type="EMBL" id="CP001138">
    <property type="protein sequence ID" value="ACH50296.1"/>
    <property type="molecule type" value="Genomic_DNA"/>
</dbReference>
<dbReference type="RefSeq" id="WP_000231963.1">
    <property type="nucleotide sequence ID" value="NC_011149.1"/>
</dbReference>
<dbReference type="SMR" id="B5F6J1"/>
<dbReference type="KEGG" id="sea:SeAg_B1718"/>
<dbReference type="HOGENOM" id="CLU_042020_0_0_6"/>
<dbReference type="Proteomes" id="UP000008819">
    <property type="component" value="Chromosome"/>
</dbReference>
<dbReference type="GO" id="GO:0005886">
    <property type="term" value="C:plasma membrane"/>
    <property type="evidence" value="ECO:0007669"/>
    <property type="project" value="UniProtKB-SubCell"/>
</dbReference>
<dbReference type="GO" id="GO:0022900">
    <property type="term" value="P:electron transport chain"/>
    <property type="evidence" value="ECO:0007669"/>
    <property type="project" value="UniProtKB-UniRule"/>
</dbReference>
<dbReference type="GO" id="GO:0055085">
    <property type="term" value="P:transmembrane transport"/>
    <property type="evidence" value="ECO:0007669"/>
    <property type="project" value="InterPro"/>
</dbReference>
<dbReference type="HAMAP" id="MF_00462">
    <property type="entry name" value="RsxD_RnfD"/>
    <property type="match status" value="1"/>
</dbReference>
<dbReference type="InterPro" id="IPR004338">
    <property type="entry name" value="NqrB/RnfD"/>
</dbReference>
<dbReference type="InterPro" id="IPR011303">
    <property type="entry name" value="RnfD_bac"/>
</dbReference>
<dbReference type="NCBIfam" id="NF002011">
    <property type="entry name" value="PRK00816.1"/>
    <property type="match status" value="1"/>
</dbReference>
<dbReference type="NCBIfam" id="TIGR01946">
    <property type="entry name" value="rnfD"/>
    <property type="match status" value="1"/>
</dbReference>
<dbReference type="PANTHER" id="PTHR30578">
    <property type="entry name" value="ELECTRON TRANSPORT COMPLEX PROTEIN RNFD"/>
    <property type="match status" value="1"/>
</dbReference>
<dbReference type="PANTHER" id="PTHR30578:SF0">
    <property type="entry name" value="ION-TRANSLOCATING OXIDOREDUCTASE COMPLEX SUBUNIT D"/>
    <property type="match status" value="1"/>
</dbReference>
<dbReference type="Pfam" id="PF03116">
    <property type="entry name" value="NQR2_RnfD_RnfE"/>
    <property type="match status" value="1"/>
</dbReference>
<organism>
    <name type="scientific">Salmonella agona (strain SL483)</name>
    <dbReference type="NCBI Taxonomy" id="454166"/>
    <lineage>
        <taxon>Bacteria</taxon>
        <taxon>Pseudomonadati</taxon>
        <taxon>Pseudomonadota</taxon>
        <taxon>Gammaproteobacteria</taxon>
        <taxon>Enterobacterales</taxon>
        <taxon>Enterobacteriaceae</taxon>
        <taxon>Salmonella</taxon>
    </lineage>
</organism>